<name>AMPP1_PODAN</name>
<accession>B2AWV6</accession>
<accession>A0A090CXB1</accession>
<comment type="function">
    <text evidence="1">Catalyzes the removal of a penultimate prolyl residue from the N-termini of peptides.</text>
</comment>
<comment type="catalytic activity">
    <reaction>
        <text>Release of any N-terminal amino acid, including proline, that is linked to proline, even from a dipeptide or tripeptide.</text>
        <dbReference type="EC" id="3.4.11.9"/>
    </reaction>
</comment>
<comment type="cofactor">
    <cofactor evidence="1">
        <name>Mn(2+)</name>
        <dbReference type="ChEBI" id="CHEBI:29035"/>
    </cofactor>
    <text evidence="1">Binds 2 manganese ions per subunit.</text>
</comment>
<comment type="similarity">
    <text evidence="2">Belongs to the peptidase M24B family.</text>
</comment>
<organism>
    <name type="scientific">Podospora anserina (strain S / ATCC MYA-4624 / DSM 980 / FGSC 10383)</name>
    <name type="common">Pleurage anserina</name>
    <dbReference type="NCBI Taxonomy" id="515849"/>
    <lineage>
        <taxon>Eukaryota</taxon>
        <taxon>Fungi</taxon>
        <taxon>Dikarya</taxon>
        <taxon>Ascomycota</taxon>
        <taxon>Pezizomycotina</taxon>
        <taxon>Sordariomycetes</taxon>
        <taxon>Sordariomycetidae</taxon>
        <taxon>Sordariales</taxon>
        <taxon>Podosporaceae</taxon>
        <taxon>Podospora</taxon>
        <taxon>Podospora anserina</taxon>
    </lineage>
</organism>
<dbReference type="EC" id="3.4.11.9"/>
<dbReference type="EMBL" id="CU633900">
    <property type="protein sequence ID" value="CAP68880.1"/>
    <property type="molecule type" value="Genomic_DNA"/>
</dbReference>
<dbReference type="EMBL" id="FO904942">
    <property type="protein sequence ID" value="CDP32352.1"/>
    <property type="molecule type" value="Genomic_DNA"/>
</dbReference>
<dbReference type="RefSeq" id="XP_001908207.1">
    <property type="nucleotide sequence ID" value="XM_001908172.1"/>
</dbReference>
<dbReference type="SMR" id="B2AWV6"/>
<dbReference type="FunCoup" id="B2AWV6">
    <property type="interactions" value="378"/>
</dbReference>
<dbReference type="STRING" id="515849.B2AWV6"/>
<dbReference type="MEROPS" id="M24.A10"/>
<dbReference type="GeneID" id="6192025"/>
<dbReference type="KEGG" id="pan:PODANSg5242"/>
<dbReference type="VEuPathDB" id="FungiDB:PODANS_7_8470"/>
<dbReference type="eggNOG" id="KOG2413">
    <property type="taxonomic scope" value="Eukaryota"/>
</dbReference>
<dbReference type="HOGENOM" id="CLU_011781_2_3_1"/>
<dbReference type="InParanoid" id="B2AWV6"/>
<dbReference type="OrthoDB" id="9995434at2759"/>
<dbReference type="Proteomes" id="UP000001197">
    <property type="component" value="Chromosome 7"/>
</dbReference>
<dbReference type="GO" id="GO:0005737">
    <property type="term" value="C:cytoplasm"/>
    <property type="evidence" value="ECO:0007669"/>
    <property type="project" value="UniProtKB-ARBA"/>
</dbReference>
<dbReference type="GO" id="GO:0046872">
    <property type="term" value="F:metal ion binding"/>
    <property type="evidence" value="ECO:0007669"/>
    <property type="project" value="UniProtKB-KW"/>
</dbReference>
<dbReference type="GO" id="GO:0070006">
    <property type="term" value="F:metalloaminopeptidase activity"/>
    <property type="evidence" value="ECO:0007669"/>
    <property type="project" value="InterPro"/>
</dbReference>
<dbReference type="GO" id="GO:0006508">
    <property type="term" value="P:proteolysis"/>
    <property type="evidence" value="ECO:0007669"/>
    <property type="project" value="UniProtKB-KW"/>
</dbReference>
<dbReference type="CDD" id="cd01085">
    <property type="entry name" value="APP"/>
    <property type="match status" value="1"/>
</dbReference>
<dbReference type="FunFam" id="3.40.350.10:FF:000010">
    <property type="entry name" value="Probable Xaa-Pro aminopeptidase P"/>
    <property type="match status" value="1"/>
</dbReference>
<dbReference type="FunFam" id="3.90.230.10:FF:000007">
    <property type="entry name" value="Xaa-Pro aminopeptidase P"/>
    <property type="match status" value="1"/>
</dbReference>
<dbReference type="FunFam" id="3.40.350.10:FF:000003">
    <property type="entry name" value="Xaa-pro aminopeptidase P"/>
    <property type="match status" value="1"/>
</dbReference>
<dbReference type="Gene3D" id="3.90.230.10">
    <property type="entry name" value="Creatinase/methionine aminopeptidase superfamily"/>
    <property type="match status" value="1"/>
</dbReference>
<dbReference type="Gene3D" id="3.40.350.10">
    <property type="entry name" value="Creatinase/prolidase N-terminal domain"/>
    <property type="match status" value="2"/>
</dbReference>
<dbReference type="InterPro" id="IPR029149">
    <property type="entry name" value="Creatin/AminoP/Spt16_N"/>
</dbReference>
<dbReference type="InterPro" id="IPR036005">
    <property type="entry name" value="Creatinase/aminopeptidase-like"/>
</dbReference>
<dbReference type="InterPro" id="IPR000587">
    <property type="entry name" value="Creatinase_N"/>
</dbReference>
<dbReference type="InterPro" id="IPR000994">
    <property type="entry name" value="Pept_M24"/>
</dbReference>
<dbReference type="InterPro" id="IPR033740">
    <property type="entry name" value="Pept_M24B"/>
</dbReference>
<dbReference type="InterPro" id="IPR032416">
    <property type="entry name" value="Peptidase_M24_C"/>
</dbReference>
<dbReference type="InterPro" id="IPR001131">
    <property type="entry name" value="Peptidase_M24B_aminopep-P_CS"/>
</dbReference>
<dbReference type="InterPro" id="IPR050422">
    <property type="entry name" value="X-Pro_aminopeptidase_P"/>
</dbReference>
<dbReference type="PANTHER" id="PTHR43763">
    <property type="entry name" value="XAA-PRO AMINOPEPTIDASE 1"/>
    <property type="match status" value="1"/>
</dbReference>
<dbReference type="PANTHER" id="PTHR43763:SF6">
    <property type="entry name" value="XAA-PRO AMINOPEPTIDASE 1"/>
    <property type="match status" value="1"/>
</dbReference>
<dbReference type="Pfam" id="PF01321">
    <property type="entry name" value="Creatinase_N"/>
    <property type="match status" value="1"/>
</dbReference>
<dbReference type="Pfam" id="PF16189">
    <property type="entry name" value="Creatinase_N_2"/>
    <property type="match status" value="1"/>
</dbReference>
<dbReference type="Pfam" id="PF00557">
    <property type="entry name" value="Peptidase_M24"/>
    <property type="match status" value="1"/>
</dbReference>
<dbReference type="Pfam" id="PF16188">
    <property type="entry name" value="Peptidase_M24_C"/>
    <property type="match status" value="1"/>
</dbReference>
<dbReference type="SUPFAM" id="SSF55920">
    <property type="entry name" value="Creatinase/aminopeptidase"/>
    <property type="match status" value="1"/>
</dbReference>
<dbReference type="SUPFAM" id="SSF53092">
    <property type="entry name" value="Creatinase/prolidase N-terminal domain"/>
    <property type="match status" value="1"/>
</dbReference>
<dbReference type="PROSITE" id="PS00491">
    <property type="entry name" value="PROLINE_PEPTIDASE"/>
    <property type="match status" value="1"/>
</dbReference>
<reference key="1">
    <citation type="journal article" date="2008" name="Genome Biol.">
        <title>The genome sequence of the model ascomycete fungus Podospora anserina.</title>
        <authorList>
            <person name="Espagne E."/>
            <person name="Lespinet O."/>
            <person name="Malagnac F."/>
            <person name="Da Silva C."/>
            <person name="Jaillon O."/>
            <person name="Porcel B.M."/>
            <person name="Couloux A."/>
            <person name="Aury J.-M."/>
            <person name="Segurens B."/>
            <person name="Poulain J."/>
            <person name="Anthouard V."/>
            <person name="Grossetete S."/>
            <person name="Khalili H."/>
            <person name="Coppin E."/>
            <person name="Dequard-Chablat M."/>
            <person name="Picard M."/>
            <person name="Contamine V."/>
            <person name="Arnaise S."/>
            <person name="Bourdais A."/>
            <person name="Berteaux-Lecellier V."/>
            <person name="Gautheret D."/>
            <person name="de Vries R.P."/>
            <person name="Battaglia E."/>
            <person name="Coutinho P.M."/>
            <person name="Danchin E.G.J."/>
            <person name="Henrissat B."/>
            <person name="El Khoury R."/>
            <person name="Sainsard-Chanet A."/>
            <person name="Boivin A."/>
            <person name="Pinan-Lucarre B."/>
            <person name="Sellem C.H."/>
            <person name="Debuchy R."/>
            <person name="Wincker P."/>
            <person name="Weissenbach J."/>
            <person name="Silar P."/>
        </authorList>
    </citation>
    <scope>NUCLEOTIDE SEQUENCE [LARGE SCALE GENOMIC DNA]</scope>
    <source>
        <strain>S / ATCC MYA-4624 / DSM 980 / FGSC 10383</strain>
    </source>
</reference>
<reference key="2">
    <citation type="journal article" date="2014" name="Genetics">
        <title>Maintaining two mating types: Structure of the mating type locus and its role in heterokaryosis in Podospora anserina.</title>
        <authorList>
            <person name="Grognet P."/>
            <person name="Bidard F."/>
            <person name="Kuchly C."/>
            <person name="Tong L.C.H."/>
            <person name="Coppin E."/>
            <person name="Benkhali J.A."/>
            <person name="Couloux A."/>
            <person name="Wincker P."/>
            <person name="Debuchy R."/>
            <person name="Silar P."/>
        </authorList>
    </citation>
    <scope>GENOME REANNOTATION</scope>
    <source>
        <strain>S / ATCC MYA-4624 / DSM 980 / FGSC 10383</strain>
    </source>
</reference>
<evidence type="ECO:0000250" key="1"/>
<evidence type="ECO:0000305" key="2"/>
<feature type="chain" id="PRO_0000411806" description="Probable Xaa-Pro aminopeptidase P">
    <location>
        <begin position="1"/>
        <end position="680"/>
    </location>
</feature>
<feature type="binding site" evidence="1">
    <location>
        <position position="477"/>
    </location>
    <ligand>
        <name>Mn(2+)</name>
        <dbReference type="ChEBI" id="CHEBI:29035"/>
        <label>2</label>
    </ligand>
</feature>
<feature type="binding site" evidence="1">
    <location>
        <position position="488"/>
    </location>
    <ligand>
        <name>Mn(2+)</name>
        <dbReference type="ChEBI" id="CHEBI:29035"/>
        <label>1</label>
    </ligand>
</feature>
<feature type="binding site" evidence="1">
    <location>
        <position position="488"/>
    </location>
    <ligand>
        <name>Mn(2+)</name>
        <dbReference type="ChEBI" id="CHEBI:29035"/>
        <label>2</label>
    </ligand>
</feature>
<feature type="binding site" evidence="1">
    <location>
        <position position="586"/>
    </location>
    <ligand>
        <name>Mn(2+)</name>
        <dbReference type="ChEBI" id="CHEBI:29035"/>
        <label>1</label>
    </ligand>
</feature>
<feature type="binding site" evidence="1">
    <location>
        <position position="600"/>
    </location>
    <ligand>
        <name>Mn(2+)</name>
        <dbReference type="ChEBI" id="CHEBI:29035"/>
        <label>1</label>
    </ligand>
</feature>
<feature type="binding site" evidence="1">
    <location>
        <position position="600"/>
    </location>
    <ligand>
        <name>Mn(2+)</name>
        <dbReference type="ChEBI" id="CHEBI:29035"/>
        <label>2</label>
    </ligand>
</feature>
<gene>
    <name type="primary">AMPP</name>
    <name type="ordered locus">Pa_7_8470</name>
    <name type="ORF">PODANS_7_8470</name>
</gene>
<keyword id="KW-0031">Aminopeptidase</keyword>
<keyword id="KW-0378">Hydrolase</keyword>
<keyword id="KW-0464">Manganese</keyword>
<keyword id="KW-0479">Metal-binding</keyword>
<keyword id="KW-0482">Metalloprotease</keyword>
<keyword id="KW-0645">Protease</keyword>
<keyword id="KW-1185">Reference proteome</keyword>
<proteinExistence type="inferred from homology"/>
<protein>
    <recommendedName>
        <fullName>Probable Xaa-Pro aminopeptidase P</fullName>
        <shortName>AMPP</shortName>
        <shortName>Aminopeptidase P</shortName>
        <ecNumber>3.4.11.9</ecNumber>
    </recommendedName>
    <alternativeName>
        <fullName>Aminoacylproline aminopeptidase</fullName>
    </alternativeName>
    <alternativeName>
        <fullName>Prolidase</fullName>
    </alternativeName>
</protein>
<sequence length="680" mass="75096">MRHIWALPSLTALSLFQASAASAVPRARQAINTSSPLAPFRTKRRFRTQAQLLSNSATKTTLVEEMVTVDTTSRLAALRSLMKERNLHVYVVPSEDSHASEYIADCDARRTFISGFSGSAGTAIVTLDKAALATDGRYFNQASKQLDSNWYLLKTGMQDVPTWQEWATQEAEGGKLIGVDPQLISSAIAEKLDEDIKNAGGGGLVGIKENLVDLVWGSEQPPRPSNSVFLLGQQYAGKDTAAKLADLRKELDKKKAAGFVLSMLDEIAWLFNLRGSDIAYNPVFFSYAIVTQASATLYIDEAKLTDECKTYLERNKVTIKPYGALFEDSEELARRAEADSKDAKPRKYLISSKGSWALKLALGGNKFVDEVRSPVGDAKAVKNDVELNGMRNCHIRDGAALTEFFAWLEDQLVNQKAQLDEVDAADKLEQIRSKHKDFVGLSFDTISSTGANAAVIHYKPEKGACKIIDPNAIYLCDSGAQYLDGTTDTTRTLHFGTPTAKEKKAYTLVLKGNIALDSVVFPKGTSGFAIDVMARQFLWKYGLDYRHGTGHGVGSFLNVHEGPIGIGTRKQYIDVALAAGNVLSIEPGYYEDEAFGIRIENLAIVKEVKTEHSFGDKPYLGFEHVTMVPYARNLIDETLLTPDEKDWLNRANKKILEKTLGYFENDPLTKAWLLRETQPF</sequence>